<reference key="1">
    <citation type="journal article" date="2000" name="Arch. Biochem. Biophys.">
        <title>Phospholipase A(2) with platelet aggregation inhibitor activity from Austrelaps superbus venom: protein purification and cDNA cloning.</title>
        <authorList>
            <person name="Singh S.B."/>
            <person name="Armugam A."/>
            <person name="Kini R.M."/>
            <person name="Jeyaseelan K."/>
        </authorList>
    </citation>
    <scope>PROTEIN SEQUENCE</scope>
    <scope>MASS SPECTROMETRY</scope>
    <source>
        <tissue>Venom</tissue>
    </source>
</reference>
<feature type="chain" id="PRO_0000161613" description="Phospholipase A2 superbin d">
    <location>
        <begin position="1"/>
        <end position="48" status="greater than"/>
    </location>
</feature>
<feature type="active site" evidence="2">
    <location>
        <position position="48"/>
    </location>
</feature>
<feature type="binding site" evidence="1">
    <location>
        <position position="28"/>
    </location>
    <ligand>
        <name>Ca(2+)</name>
        <dbReference type="ChEBI" id="CHEBI:29108"/>
    </ligand>
</feature>
<feature type="binding site" evidence="1">
    <location>
        <position position="30"/>
    </location>
    <ligand>
        <name>Ca(2+)</name>
        <dbReference type="ChEBI" id="CHEBI:29108"/>
    </ligand>
</feature>
<feature type="binding site" evidence="1">
    <location>
        <position position="32"/>
    </location>
    <ligand>
        <name>Ca(2+)</name>
        <dbReference type="ChEBI" id="CHEBI:29108"/>
    </ligand>
</feature>
<feature type="disulfide bond" evidence="1">
    <location>
        <begin position="29"/>
        <end position="45"/>
    </location>
</feature>
<feature type="non-terminal residue">
    <location>
        <position position="48"/>
    </location>
</feature>
<dbReference type="EC" id="3.1.1.4"/>
<dbReference type="SMR" id="P59070"/>
<dbReference type="GO" id="GO:0005576">
    <property type="term" value="C:extracellular region"/>
    <property type="evidence" value="ECO:0007669"/>
    <property type="project" value="UniProtKB-SubCell"/>
</dbReference>
<dbReference type="GO" id="GO:0005509">
    <property type="term" value="F:calcium ion binding"/>
    <property type="evidence" value="ECO:0007669"/>
    <property type="project" value="InterPro"/>
</dbReference>
<dbReference type="GO" id="GO:0047498">
    <property type="term" value="F:calcium-dependent phospholipase A2 activity"/>
    <property type="evidence" value="ECO:0007669"/>
    <property type="project" value="TreeGrafter"/>
</dbReference>
<dbReference type="GO" id="GO:0005543">
    <property type="term" value="F:phospholipid binding"/>
    <property type="evidence" value="ECO:0007669"/>
    <property type="project" value="TreeGrafter"/>
</dbReference>
<dbReference type="GO" id="GO:0090729">
    <property type="term" value="F:toxin activity"/>
    <property type="evidence" value="ECO:0007669"/>
    <property type="project" value="UniProtKB-KW"/>
</dbReference>
<dbReference type="GO" id="GO:0050482">
    <property type="term" value="P:arachidonate secretion"/>
    <property type="evidence" value="ECO:0007669"/>
    <property type="project" value="InterPro"/>
</dbReference>
<dbReference type="GO" id="GO:0016042">
    <property type="term" value="P:lipid catabolic process"/>
    <property type="evidence" value="ECO:0007669"/>
    <property type="project" value="UniProtKB-KW"/>
</dbReference>
<dbReference type="GO" id="GO:0006644">
    <property type="term" value="P:phospholipid metabolic process"/>
    <property type="evidence" value="ECO:0007669"/>
    <property type="project" value="InterPro"/>
</dbReference>
<dbReference type="Gene3D" id="1.20.90.10">
    <property type="entry name" value="Phospholipase A2 domain"/>
    <property type="match status" value="1"/>
</dbReference>
<dbReference type="InterPro" id="IPR001211">
    <property type="entry name" value="PLipase_A2"/>
</dbReference>
<dbReference type="InterPro" id="IPR016090">
    <property type="entry name" value="PLipase_A2_dom"/>
</dbReference>
<dbReference type="InterPro" id="IPR036444">
    <property type="entry name" value="PLipase_A2_dom_sf"/>
</dbReference>
<dbReference type="PANTHER" id="PTHR11716:SF94">
    <property type="entry name" value="PHOSPHOLIPASE A2"/>
    <property type="match status" value="1"/>
</dbReference>
<dbReference type="PANTHER" id="PTHR11716">
    <property type="entry name" value="PHOSPHOLIPASE A2 FAMILY MEMBER"/>
    <property type="match status" value="1"/>
</dbReference>
<dbReference type="Pfam" id="PF00068">
    <property type="entry name" value="Phospholip_A2_1"/>
    <property type="match status" value="1"/>
</dbReference>
<dbReference type="PRINTS" id="PR00389">
    <property type="entry name" value="PHPHLIPASEA2"/>
</dbReference>
<dbReference type="SMART" id="SM00085">
    <property type="entry name" value="PA2c"/>
    <property type="match status" value="1"/>
</dbReference>
<dbReference type="SUPFAM" id="SSF48619">
    <property type="entry name" value="Phospholipase A2, PLA2"/>
    <property type="match status" value="1"/>
</dbReference>
<name>PA2SD_AUSSU</name>
<accession>P59070</accession>
<keyword id="KW-0106">Calcium</keyword>
<keyword id="KW-0903">Direct protein sequencing</keyword>
<keyword id="KW-1015">Disulfide bond</keyword>
<keyword id="KW-1199">Hemostasis impairing toxin</keyword>
<keyword id="KW-0378">Hydrolase</keyword>
<keyword id="KW-0442">Lipid degradation</keyword>
<keyword id="KW-0443">Lipid metabolism</keyword>
<keyword id="KW-0479">Metal-binding</keyword>
<keyword id="KW-1201">Platelet aggregation inhibiting toxin</keyword>
<keyword id="KW-0964">Secreted</keyword>
<keyword id="KW-0800">Toxin</keyword>
<comment type="function">
    <text>Snake venom phospholipase A2 (PLA2) that inhibits collagen-induced platelet aggregation. In terms of inhibition of platelet aggregation, superbin d is less potent as superbin a, b, and c. PLA2 catalyzes the calcium-dependent hydrolysis of the 2-acyl groups in 3-sn-phosphoglycerides.</text>
</comment>
<comment type="catalytic activity">
    <reaction evidence="2">
        <text>a 1,2-diacyl-sn-glycero-3-phosphocholine + H2O = a 1-acyl-sn-glycero-3-phosphocholine + a fatty acid + H(+)</text>
        <dbReference type="Rhea" id="RHEA:15801"/>
        <dbReference type="ChEBI" id="CHEBI:15377"/>
        <dbReference type="ChEBI" id="CHEBI:15378"/>
        <dbReference type="ChEBI" id="CHEBI:28868"/>
        <dbReference type="ChEBI" id="CHEBI:57643"/>
        <dbReference type="ChEBI" id="CHEBI:58168"/>
        <dbReference type="EC" id="3.1.1.4"/>
    </reaction>
</comment>
<comment type="cofactor">
    <cofactor evidence="1">
        <name>Ca(2+)</name>
        <dbReference type="ChEBI" id="CHEBI:29108"/>
    </cofactor>
    <text evidence="1">Binds 1 Ca(2+) ion.</text>
</comment>
<comment type="subcellular location">
    <subcellularLocation>
        <location>Secreted</location>
    </subcellularLocation>
</comment>
<comment type="tissue specificity">
    <text>Expressed by the venom gland.</text>
</comment>
<comment type="mass spectrometry"/>
<comment type="similarity">
    <text evidence="4">Belongs to the phospholipase A2 family. Group I subfamily.</text>
</comment>
<proteinExistence type="evidence at protein level"/>
<protein>
    <recommendedName>
        <fullName>Phospholipase A2 superbin d</fullName>
        <shortName>svPLA2</shortName>
        <ecNumber>3.1.1.4</ecNumber>
    </recommendedName>
    <alternativeName>
        <fullName>Phosphatidylcholine 2-acylhydrolase</fullName>
    </alternativeName>
</protein>
<evidence type="ECO:0000250" key="1"/>
<evidence type="ECO:0000255" key="2">
    <source>
        <dbReference type="PROSITE-ProRule" id="PRU10035"/>
    </source>
</evidence>
<evidence type="ECO:0000269" key="3">
    <source>
    </source>
</evidence>
<evidence type="ECO:0000305" key="4"/>
<organism>
    <name type="scientific">Austrelaps superbus</name>
    <name type="common">Lowland copperhead snake</name>
    <name type="synonym">Hoplocephalus superbus</name>
    <dbReference type="NCBI Taxonomy" id="29156"/>
    <lineage>
        <taxon>Eukaryota</taxon>
        <taxon>Metazoa</taxon>
        <taxon>Chordata</taxon>
        <taxon>Craniata</taxon>
        <taxon>Vertebrata</taxon>
        <taxon>Euteleostomi</taxon>
        <taxon>Lepidosauria</taxon>
        <taxon>Squamata</taxon>
        <taxon>Bifurcata</taxon>
        <taxon>Unidentata</taxon>
        <taxon>Episquamata</taxon>
        <taxon>Toxicofera</taxon>
        <taxon>Serpentes</taxon>
        <taxon>Colubroidea</taxon>
        <taxon>Elapidae</taxon>
        <taxon>Hydrophiinae</taxon>
        <taxon>Austrelaps</taxon>
    </lineage>
</organism>
<sequence>NLVQFSNMIQCANHGSRPTRHYVDYGCYCGWGGSGTPVDELDRCCQTH</sequence>